<accession>A9M8K5</accession>
<proteinExistence type="inferred from homology"/>
<protein>
    <recommendedName>
        <fullName evidence="1">Peptide chain release factor 1</fullName>
        <shortName evidence="1">RF-1</shortName>
    </recommendedName>
</protein>
<sequence length="359" mass="39895">MIALPQDRMDQLLKRFSMIESQMANNPDSDTYVKLASEYSELQDVVGKIRELSDARMEASDLAAMRDDASTDAEMRALAVEELPEVEKRIAVLEQDVQILLLPKDAADDKNAILEIRAGTGGLEAALFAGDLFRMYERYAAEKGWRVELVSASEGDAGGYKEIIATVSGKGVFSKLKFESGVHRVQRVPETEAGGRIHTSAATVAVLPEAEDIDIEIRNEDIRIDTMRASGAGGQHVNTTDSAVRITHIPTGIMVVQAEKSQHQNRARAMQILRARLYDMERQKAESERSQARRSQVGSGDRSERIRTYNFPQGRVTDHRINLTLYKLDRVMEGDLDELVDALISDHQTALLAELGEQP</sequence>
<reference key="1">
    <citation type="submission" date="2007-10" db="EMBL/GenBank/DDBJ databases">
        <title>Brucella canis ATCC 23365 whole genome shotgun sequencing project.</title>
        <authorList>
            <person name="Setubal J.C."/>
            <person name="Bowns C."/>
            <person name="Boyle S."/>
            <person name="Crasta O.R."/>
            <person name="Czar M.J."/>
            <person name="Dharmanolla C."/>
            <person name="Gillespie J.J."/>
            <person name="Kenyon R.W."/>
            <person name="Lu J."/>
            <person name="Mane S."/>
            <person name="Mohapatra S."/>
            <person name="Nagrani S."/>
            <person name="Purkayastha A."/>
            <person name="Rajasimha H.K."/>
            <person name="Shallom J.M."/>
            <person name="Shallom S."/>
            <person name="Shukla M."/>
            <person name="Snyder E.E."/>
            <person name="Sobral B.W."/>
            <person name="Wattam A.R."/>
            <person name="Will R."/>
            <person name="Williams K."/>
            <person name="Yoo H."/>
            <person name="Bruce D."/>
            <person name="Detter C."/>
            <person name="Munk C."/>
            <person name="Brettin T.S."/>
        </authorList>
    </citation>
    <scope>NUCLEOTIDE SEQUENCE [LARGE SCALE GENOMIC DNA]</scope>
    <source>
        <strain>ATCC 23365 / NCTC 10854 / RM-666</strain>
    </source>
</reference>
<keyword id="KW-0963">Cytoplasm</keyword>
<keyword id="KW-0488">Methylation</keyword>
<keyword id="KW-0648">Protein biosynthesis</keyword>
<keyword id="KW-1185">Reference proteome</keyword>
<feature type="chain" id="PRO_1000075484" description="Peptide chain release factor 1">
    <location>
        <begin position="1"/>
        <end position="359"/>
    </location>
</feature>
<feature type="region of interest" description="Disordered" evidence="2">
    <location>
        <begin position="283"/>
        <end position="309"/>
    </location>
</feature>
<feature type="modified residue" description="N5-methylglutamine" evidence="1">
    <location>
        <position position="235"/>
    </location>
</feature>
<name>RF1_BRUC2</name>
<comment type="function">
    <text evidence="1">Peptide chain release factor 1 directs the termination of translation in response to the peptide chain termination codons UAG and UAA.</text>
</comment>
<comment type="subcellular location">
    <subcellularLocation>
        <location evidence="1">Cytoplasm</location>
    </subcellularLocation>
</comment>
<comment type="PTM">
    <text evidence="1">Methylated by PrmC. Methylation increases the termination efficiency of RF1.</text>
</comment>
<comment type="similarity">
    <text evidence="1">Belongs to the prokaryotic/mitochondrial release factor family.</text>
</comment>
<evidence type="ECO:0000255" key="1">
    <source>
        <dbReference type="HAMAP-Rule" id="MF_00093"/>
    </source>
</evidence>
<evidence type="ECO:0000256" key="2">
    <source>
        <dbReference type="SAM" id="MobiDB-lite"/>
    </source>
</evidence>
<organism>
    <name type="scientific">Brucella canis (strain ATCC 23365 / NCTC 10854 / RM-666)</name>
    <dbReference type="NCBI Taxonomy" id="483179"/>
    <lineage>
        <taxon>Bacteria</taxon>
        <taxon>Pseudomonadati</taxon>
        <taxon>Pseudomonadota</taxon>
        <taxon>Alphaproteobacteria</taxon>
        <taxon>Hyphomicrobiales</taxon>
        <taxon>Brucellaceae</taxon>
        <taxon>Brucella/Ochrobactrum group</taxon>
        <taxon>Brucella</taxon>
    </lineage>
</organism>
<gene>
    <name evidence="1" type="primary">prfA</name>
    <name type="ordered locus">BCAN_A1913</name>
</gene>
<dbReference type="EMBL" id="CP000872">
    <property type="protein sequence ID" value="ABX62903.1"/>
    <property type="molecule type" value="Genomic_DNA"/>
</dbReference>
<dbReference type="RefSeq" id="WP_004689263.1">
    <property type="nucleotide sequence ID" value="NC_010103.1"/>
</dbReference>
<dbReference type="SMR" id="A9M8K5"/>
<dbReference type="GeneID" id="55591464"/>
<dbReference type="KEGG" id="bcs:BCAN_A1913"/>
<dbReference type="HOGENOM" id="CLU_036856_0_1_5"/>
<dbReference type="Proteomes" id="UP000001385">
    <property type="component" value="Chromosome I"/>
</dbReference>
<dbReference type="GO" id="GO:0005737">
    <property type="term" value="C:cytoplasm"/>
    <property type="evidence" value="ECO:0007669"/>
    <property type="project" value="UniProtKB-SubCell"/>
</dbReference>
<dbReference type="GO" id="GO:0016149">
    <property type="term" value="F:translation release factor activity, codon specific"/>
    <property type="evidence" value="ECO:0007669"/>
    <property type="project" value="UniProtKB-UniRule"/>
</dbReference>
<dbReference type="FunFam" id="3.30.160.20:FF:000004">
    <property type="entry name" value="Peptide chain release factor 1"/>
    <property type="match status" value="1"/>
</dbReference>
<dbReference type="FunFam" id="3.30.70.1660:FF:000002">
    <property type="entry name" value="Peptide chain release factor 1"/>
    <property type="match status" value="1"/>
</dbReference>
<dbReference type="FunFam" id="3.30.70.1660:FF:000004">
    <property type="entry name" value="Peptide chain release factor 1"/>
    <property type="match status" value="1"/>
</dbReference>
<dbReference type="Gene3D" id="3.30.160.20">
    <property type="match status" value="1"/>
</dbReference>
<dbReference type="Gene3D" id="3.30.70.1660">
    <property type="match status" value="2"/>
</dbReference>
<dbReference type="Gene3D" id="6.10.140.1950">
    <property type="match status" value="1"/>
</dbReference>
<dbReference type="HAMAP" id="MF_00093">
    <property type="entry name" value="Rel_fac_1"/>
    <property type="match status" value="1"/>
</dbReference>
<dbReference type="InterPro" id="IPR005139">
    <property type="entry name" value="PCRF"/>
</dbReference>
<dbReference type="InterPro" id="IPR000352">
    <property type="entry name" value="Pep_chain_release_fac_I"/>
</dbReference>
<dbReference type="InterPro" id="IPR045853">
    <property type="entry name" value="Pep_chain_release_fac_I_sf"/>
</dbReference>
<dbReference type="InterPro" id="IPR050057">
    <property type="entry name" value="Prokaryotic/Mito_RF"/>
</dbReference>
<dbReference type="InterPro" id="IPR004373">
    <property type="entry name" value="RF-1"/>
</dbReference>
<dbReference type="NCBIfam" id="TIGR00019">
    <property type="entry name" value="prfA"/>
    <property type="match status" value="1"/>
</dbReference>
<dbReference type="NCBIfam" id="NF001859">
    <property type="entry name" value="PRK00591.1"/>
    <property type="match status" value="1"/>
</dbReference>
<dbReference type="PANTHER" id="PTHR43804">
    <property type="entry name" value="LD18447P"/>
    <property type="match status" value="1"/>
</dbReference>
<dbReference type="PANTHER" id="PTHR43804:SF7">
    <property type="entry name" value="LD18447P"/>
    <property type="match status" value="1"/>
</dbReference>
<dbReference type="Pfam" id="PF03462">
    <property type="entry name" value="PCRF"/>
    <property type="match status" value="1"/>
</dbReference>
<dbReference type="Pfam" id="PF00472">
    <property type="entry name" value="RF-1"/>
    <property type="match status" value="1"/>
</dbReference>
<dbReference type="SMART" id="SM00937">
    <property type="entry name" value="PCRF"/>
    <property type="match status" value="1"/>
</dbReference>
<dbReference type="SUPFAM" id="SSF75620">
    <property type="entry name" value="Release factor"/>
    <property type="match status" value="1"/>
</dbReference>
<dbReference type="PROSITE" id="PS00745">
    <property type="entry name" value="RF_PROK_I"/>
    <property type="match status" value="1"/>
</dbReference>